<keyword id="KW-0963">Cytoplasm</keyword>
<keyword id="KW-0444">Lipid biosynthesis</keyword>
<keyword id="KW-0443">Lipid metabolism</keyword>
<keyword id="KW-0594">Phospholipid biosynthesis</keyword>
<keyword id="KW-1208">Phospholipid metabolism</keyword>
<keyword id="KW-1185">Reference proteome</keyword>
<keyword id="KW-0808">Transferase</keyword>
<accession>A4SVV3</accession>
<protein>
    <recommendedName>
        <fullName evidence="1">Phosphate acyltransferase</fullName>
        <ecNumber evidence="1">2.3.1.274</ecNumber>
    </recommendedName>
    <alternativeName>
        <fullName evidence="1">Acyl-ACP phosphotransacylase</fullName>
    </alternativeName>
    <alternativeName>
        <fullName evidence="1">Acyl-[acyl-carrier-protein]--phosphate acyltransferase</fullName>
    </alternativeName>
    <alternativeName>
        <fullName evidence="1">Phosphate-acyl-ACP acyltransferase</fullName>
    </alternativeName>
</protein>
<comment type="function">
    <text evidence="1">Catalyzes the reversible formation of acyl-phosphate (acyl-PO(4)) from acyl-[acyl-carrier-protein] (acyl-ACP). This enzyme utilizes acyl-ACP as fatty acyl donor, but not acyl-CoA.</text>
</comment>
<comment type="catalytic activity">
    <reaction evidence="1">
        <text>a fatty acyl-[ACP] + phosphate = an acyl phosphate + holo-[ACP]</text>
        <dbReference type="Rhea" id="RHEA:42292"/>
        <dbReference type="Rhea" id="RHEA-COMP:9685"/>
        <dbReference type="Rhea" id="RHEA-COMP:14125"/>
        <dbReference type="ChEBI" id="CHEBI:43474"/>
        <dbReference type="ChEBI" id="CHEBI:59918"/>
        <dbReference type="ChEBI" id="CHEBI:64479"/>
        <dbReference type="ChEBI" id="CHEBI:138651"/>
        <dbReference type="EC" id="2.3.1.274"/>
    </reaction>
</comment>
<comment type="pathway">
    <text evidence="1">Lipid metabolism; phospholipid metabolism.</text>
</comment>
<comment type="subunit">
    <text evidence="1">Homodimer. Probably interacts with PlsY.</text>
</comment>
<comment type="subcellular location">
    <subcellularLocation>
        <location evidence="1">Cytoplasm</location>
    </subcellularLocation>
    <text evidence="1">Associated with the membrane possibly through PlsY.</text>
</comment>
<comment type="similarity">
    <text evidence="1">Belongs to the PlsX family.</text>
</comment>
<feature type="chain" id="PRO_1000074169" description="Phosphate acyltransferase">
    <location>
        <begin position="1"/>
        <end position="337"/>
    </location>
</feature>
<evidence type="ECO:0000255" key="1">
    <source>
        <dbReference type="HAMAP-Rule" id="MF_00019"/>
    </source>
</evidence>
<proteinExistence type="inferred from homology"/>
<dbReference type="EC" id="2.3.1.274" evidence="1"/>
<dbReference type="EMBL" id="CP000655">
    <property type="protein sequence ID" value="ABP33617.1"/>
    <property type="molecule type" value="Genomic_DNA"/>
</dbReference>
<dbReference type="RefSeq" id="WP_011902242.1">
    <property type="nucleotide sequence ID" value="NC_009379.1"/>
</dbReference>
<dbReference type="SMR" id="A4SVV3"/>
<dbReference type="GeneID" id="31480748"/>
<dbReference type="KEGG" id="pnu:Pnuc_0397"/>
<dbReference type="eggNOG" id="COG0416">
    <property type="taxonomic scope" value="Bacteria"/>
</dbReference>
<dbReference type="HOGENOM" id="CLU_039379_1_0_4"/>
<dbReference type="UniPathway" id="UPA00085"/>
<dbReference type="Proteomes" id="UP000000231">
    <property type="component" value="Chromosome"/>
</dbReference>
<dbReference type="GO" id="GO:0005737">
    <property type="term" value="C:cytoplasm"/>
    <property type="evidence" value="ECO:0007669"/>
    <property type="project" value="UniProtKB-SubCell"/>
</dbReference>
<dbReference type="GO" id="GO:0043811">
    <property type="term" value="F:phosphate:acyl-[acyl carrier protein] acyltransferase activity"/>
    <property type="evidence" value="ECO:0007669"/>
    <property type="project" value="UniProtKB-UniRule"/>
</dbReference>
<dbReference type="GO" id="GO:0006633">
    <property type="term" value="P:fatty acid biosynthetic process"/>
    <property type="evidence" value="ECO:0007669"/>
    <property type="project" value="UniProtKB-UniRule"/>
</dbReference>
<dbReference type="GO" id="GO:0008654">
    <property type="term" value="P:phospholipid biosynthetic process"/>
    <property type="evidence" value="ECO:0007669"/>
    <property type="project" value="UniProtKB-KW"/>
</dbReference>
<dbReference type="Gene3D" id="3.40.718.10">
    <property type="entry name" value="Isopropylmalate Dehydrogenase"/>
    <property type="match status" value="1"/>
</dbReference>
<dbReference type="HAMAP" id="MF_00019">
    <property type="entry name" value="PlsX"/>
    <property type="match status" value="1"/>
</dbReference>
<dbReference type="InterPro" id="IPR003664">
    <property type="entry name" value="FA_synthesis"/>
</dbReference>
<dbReference type="InterPro" id="IPR012281">
    <property type="entry name" value="Phospholipid_synth_PlsX-like"/>
</dbReference>
<dbReference type="NCBIfam" id="TIGR00182">
    <property type="entry name" value="plsX"/>
    <property type="match status" value="1"/>
</dbReference>
<dbReference type="PANTHER" id="PTHR30100">
    <property type="entry name" value="FATTY ACID/PHOSPHOLIPID SYNTHESIS PROTEIN PLSX"/>
    <property type="match status" value="1"/>
</dbReference>
<dbReference type="PANTHER" id="PTHR30100:SF1">
    <property type="entry name" value="PHOSPHATE ACYLTRANSFERASE"/>
    <property type="match status" value="1"/>
</dbReference>
<dbReference type="Pfam" id="PF02504">
    <property type="entry name" value="FA_synthesis"/>
    <property type="match status" value="1"/>
</dbReference>
<dbReference type="PIRSF" id="PIRSF002465">
    <property type="entry name" value="Phsphlp_syn_PlsX"/>
    <property type="match status" value="1"/>
</dbReference>
<dbReference type="SUPFAM" id="SSF53659">
    <property type="entry name" value="Isocitrate/Isopropylmalate dehydrogenase-like"/>
    <property type="match status" value="1"/>
</dbReference>
<sequence length="337" mass="36344">MSVTLAIDAMGGDHGVVVTVPAACDFLEKHSDVKIILVGDPDLIKQVLDKSPKAPIERIQIIAASEVVLMDDPIEIALRRKKDSSMRVAIVQVKEGAADAVVSSGNTGALMAISRYILKTLDGVDRPAIATAIPNELGLGTTMLDLGANADCEPMHLVQFAQMANVMVQVVDGKPNPSIGLLNIGEEVIKGNEVVKQTSELLRQTNLNFYGNVEGNDIFKGTTDIVVCDGFVGNVVLKASEGLAKMMSGLIRKEFNRSLFTKLMAVCAMVPLLRVRKRVDHRRYNGAVLLGLRGCVIKSHGSADRFAFGFALERAYEASKNHMVERIAAAFVVETTE</sequence>
<name>PLSX_POLAQ</name>
<reference key="1">
    <citation type="journal article" date="2012" name="Stand. Genomic Sci.">
        <title>Complete genome sequence of Polynucleobacter necessarius subsp. asymbioticus type strain (QLW-P1DMWA-1(T)).</title>
        <authorList>
            <person name="Meincke L."/>
            <person name="Copeland A."/>
            <person name="Lapidus A."/>
            <person name="Lucas S."/>
            <person name="Berry K.W."/>
            <person name="Del Rio T.G."/>
            <person name="Hammon N."/>
            <person name="Dalin E."/>
            <person name="Tice H."/>
            <person name="Pitluck S."/>
            <person name="Richardson P."/>
            <person name="Bruce D."/>
            <person name="Goodwin L."/>
            <person name="Han C."/>
            <person name="Tapia R."/>
            <person name="Detter J.C."/>
            <person name="Schmutz J."/>
            <person name="Brettin T."/>
            <person name="Larimer F."/>
            <person name="Land M."/>
            <person name="Hauser L."/>
            <person name="Kyrpides N.C."/>
            <person name="Ivanova N."/>
            <person name="Goker M."/>
            <person name="Woyke T."/>
            <person name="Wu Q.L."/>
            <person name="Pockl M."/>
            <person name="Hahn M.W."/>
            <person name="Klenk H.P."/>
        </authorList>
    </citation>
    <scope>NUCLEOTIDE SEQUENCE [LARGE SCALE GENOMIC DNA]</scope>
    <source>
        <strain>DSM 18221 / CIP 109841 / QLW-P1DMWA-1</strain>
    </source>
</reference>
<gene>
    <name evidence="1" type="primary">plsX</name>
    <name type="ordered locus">Pnuc_0397</name>
</gene>
<organism>
    <name type="scientific">Polynucleobacter asymbioticus (strain DSM 18221 / CIP 109841 / QLW-P1DMWA-1)</name>
    <name type="common">Polynucleobacter necessarius subsp. asymbioticus</name>
    <dbReference type="NCBI Taxonomy" id="312153"/>
    <lineage>
        <taxon>Bacteria</taxon>
        <taxon>Pseudomonadati</taxon>
        <taxon>Pseudomonadota</taxon>
        <taxon>Betaproteobacteria</taxon>
        <taxon>Burkholderiales</taxon>
        <taxon>Burkholderiaceae</taxon>
        <taxon>Polynucleobacter</taxon>
    </lineage>
</organism>